<reference evidence="10" key="1">
    <citation type="journal article" date="2001" name="Nature">
        <title>Complete genome sequence of Salmonella enterica serovar Typhimurium LT2.</title>
        <authorList>
            <person name="McClelland M."/>
            <person name="Sanderson K.E."/>
            <person name="Spieth J."/>
            <person name="Clifton S.W."/>
            <person name="Latreille P."/>
            <person name="Courtney L."/>
            <person name="Porwollik S."/>
            <person name="Ali J."/>
            <person name="Dante M."/>
            <person name="Du F."/>
            <person name="Hou S."/>
            <person name="Layman D."/>
            <person name="Leonard S."/>
            <person name="Nguyen C."/>
            <person name="Scott K."/>
            <person name="Holmes A."/>
            <person name="Grewal N."/>
            <person name="Mulvaney E."/>
            <person name="Ryan E."/>
            <person name="Sun H."/>
            <person name="Florea L."/>
            <person name="Miller W."/>
            <person name="Stoneking T."/>
            <person name="Nhan M."/>
            <person name="Waterston R."/>
            <person name="Wilson R.K."/>
        </authorList>
    </citation>
    <scope>NUCLEOTIDE SEQUENCE [LARGE SCALE GENOMIC DNA]</scope>
    <source>
        <strain evidence="10">LT2 / SGSC1412 / ATCC 700720</strain>
    </source>
</reference>
<reference evidence="8" key="2">
    <citation type="journal article" date="2008" name="Antimicrob. Agents Chemother.">
        <title>RamA confers multidrug resistance in Salmonella enterica via increased expression of acrB, which is inhibited by chlorpromazine.</title>
        <authorList>
            <person name="Bailey A.M."/>
            <person name="Paulsen I.T."/>
            <person name="Piddock L.J."/>
        </authorList>
    </citation>
    <scope>FUNCTION</scope>
    <scope>INDUCTION BY CHLORPROMAZINE</scope>
    <scope>DISRUPTION PHENOTYPE</scope>
    <source>
        <strain evidence="7">14028S</strain>
        <strain evidence="7">SL1344</strain>
    </source>
</reference>
<reference evidence="8" key="3">
    <citation type="journal article" date="2008" name="J. Biol. Chem.">
        <title>AcrAB multidrug efflux pump regulation in Salmonella enterica serovar Typhimurium by RamA in response to environmental signals.</title>
        <authorList>
            <person name="Nikaido E."/>
            <person name="Yamaguchi A."/>
            <person name="Nishino K."/>
        </authorList>
    </citation>
    <scope>FUNCTION</scope>
    <scope>INDUCTION BY INDOLE</scope>
    <scope>DISRUPTION PHENOTYPE</scope>
    <scope>MUTAGENESIS OF 1-MET--LEU-23</scope>
    <source>
        <strain evidence="6">14028S</strain>
    </source>
</reference>
<reference evidence="8" key="4">
    <citation type="journal article" date="2010" name="J. Bacteriol.">
        <title>RamA, a member of the AraC/XylS family, influences both virulence and efflux in Salmonella enterica serovar Typhimurium.</title>
        <authorList>
            <person name="Bailey A.M."/>
            <person name="Ivens A."/>
            <person name="Kingsley R."/>
            <person name="Cottell J.L."/>
            <person name="Wain J."/>
            <person name="Piddock L.J."/>
        </authorList>
    </citation>
    <scope>FUNCTION</scope>
    <scope>DISRUPTION PHENOTYPE</scope>
</reference>
<reference key="5">
    <citation type="journal article" date="2019" name="J. Bacteriol.">
        <title>Multidrug Resistance Regulators MarA, SoxS, Rob, and RamA Repress Flagellar Gene Expression and Motility in Salmonella enterica Serovar Typhimurium.</title>
        <authorList>
            <person name="Thota S.S."/>
            <person name="Chubiz L.M."/>
        </authorList>
    </citation>
    <scope>FUNCTION</scope>
</reference>
<name>RAMA_SALTY</name>
<dbReference type="EMBL" id="AE006468">
    <property type="protein sequence ID" value="AAL19532.1"/>
    <property type="molecule type" value="Genomic_DNA"/>
</dbReference>
<dbReference type="RefSeq" id="NP_459573.1">
    <property type="nucleotide sequence ID" value="NC_003197.2"/>
</dbReference>
<dbReference type="RefSeq" id="WP_000155631.1">
    <property type="nucleotide sequence ID" value="NC_003197.2"/>
</dbReference>
<dbReference type="SMR" id="H9L484"/>
<dbReference type="STRING" id="99287.STM0581"/>
<dbReference type="PaxDb" id="99287-STM0581"/>
<dbReference type="GeneID" id="1252101"/>
<dbReference type="KEGG" id="stm:STM0581"/>
<dbReference type="PATRIC" id="fig|99287.12.peg.613"/>
<dbReference type="HOGENOM" id="CLU_000445_81_14_6"/>
<dbReference type="OMA" id="SCVAKQV"/>
<dbReference type="PhylomeDB" id="H9L484"/>
<dbReference type="BioCyc" id="SENT99287:STM0581-MONOMER"/>
<dbReference type="Proteomes" id="UP000001014">
    <property type="component" value="Chromosome"/>
</dbReference>
<dbReference type="GO" id="GO:0005829">
    <property type="term" value="C:cytosol"/>
    <property type="evidence" value="ECO:0000318"/>
    <property type="project" value="GO_Central"/>
</dbReference>
<dbReference type="GO" id="GO:0001108">
    <property type="term" value="F:bacterial-type RNA polymerase holo enzyme binding"/>
    <property type="evidence" value="ECO:0000318"/>
    <property type="project" value="GO_Central"/>
</dbReference>
<dbReference type="GO" id="GO:0003700">
    <property type="term" value="F:DNA-binding transcription factor activity"/>
    <property type="evidence" value="ECO:0007669"/>
    <property type="project" value="InterPro"/>
</dbReference>
<dbReference type="GO" id="GO:0043565">
    <property type="term" value="F:sequence-specific DNA binding"/>
    <property type="evidence" value="ECO:0000318"/>
    <property type="project" value="GO_Central"/>
</dbReference>
<dbReference type="GO" id="GO:0006355">
    <property type="term" value="P:regulation of DNA-templated transcription"/>
    <property type="evidence" value="ECO:0000318"/>
    <property type="project" value="GO_Central"/>
</dbReference>
<dbReference type="Gene3D" id="1.10.10.60">
    <property type="entry name" value="Homeodomain-like"/>
    <property type="match status" value="2"/>
</dbReference>
<dbReference type="InterPro" id="IPR009057">
    <property type="entry name" value="Homeodomain-like_sf"/>
</dbReference>
<dbReference type="InterPro" id="IPR018060">
    <property type="entry name" value="HTH_AraC"/>
</dbReference>
<dbReference type="InterPro" id="IPR018062">
    <property type="entry name" value="HTH_AraC-typ_CS"/>
</dbReference>
<dbReference type="InterPro" id="IPR050959">
    <property type="entry name" value="MarA-like"/>
</dbReference>
<dbReference type="InterPro" id="IPR020449">
    <property type="entry name" value="Tscrpt_reg_AraC-type_HTH"/>
</dbReference>
<dbReference type="NCBIfam" id="NF012144">
    <property type="entry name" value="ramA_TF"/>
    <property type="match status" value="1"/>
</dbReference>
<dbReference type="PANTHER" id="PTHR47504:SF2">
    <property type="entry name" value="REGULATORY PROTEIN SOXS"/>
    <property type="match status" value="1"/>
</dbReference>
<dbReference type="PANTHER" id="PTHR47504">
    <property type="entry name" value="RIGHT ORIGIN-BINDING PROTEIN"/>
    <property type="match status" value="1"/>
</dbReference>
<dbReference type="Pfam" id="PF12833">
    <property type="entry name" value="HTH_18"/>
    <property type="match status" value="1"/>
</dbReference>
<dbReference type="PRINTS" id="PR00032">
    <property type="entry name" value="HTHARAC"/>
</dbReference>
<dbReference type="SMART" id="SM00342">
    <property type="entry name" value="HTH_ARAC"/>
    <property type="match status" value="1"/>
</dbReference>
<dbReference type="SUPFAM" id="SSF46689">
    <property type="entry name" value="Homeodomain-like"/>
    <property type="match status" value="2"/>
</dbReference>
<dbReference type="PROSITE" id="PS00041">
    <property type="entry name" value="HTH_ARAC_FAMILY_1"/>
    <property type="match status" value="1"/>
</dbReference>
<dbReference type="PROSITE" id="PS01124">
    <property type="entry name" value="HTH_ARAC_FAMILY_2"/>
    <property type="match status" value="1"/>
</dbReference>
<evidence type="ECO:0000255" key="1">
    <source>
        <dbReference type="PROSITE-ProRule" id="PRU00593"/>
    </source>
</evidence>
<evidence type="ECO:0000269" key="2">
    <source>
    </source>
</evidence>
<evidence type="ECO:0000269" key="3">
    <source>
    </source>
</evidence>
<evidence type="ECO:0000269" key="4">
    <source>
    </source>
</evidence>
<evidence type="ECO:0000269" key="5">
    <source>
    </source>
</evidence>
<evidence type="ECO:0000303" key="6">
    <source>
    </source>
</evidence>
<evidence type="ECO:0000303" key="7">
    <source>
    </source>
</evidence>
<evidence type="ECO:0000305" key="8"/>
<evidence type="ECO:0000312" key="9">
    <source>
        <dbReference type="EMBL" id="AAL19532.1"/>
    </source>
</evidence>
<evidence type="ECO:0000312" key="10">
    <source>
        <dbReference type="Proteomes" id="UP000001014"/>
    </source>
</evidence>
<accession>H9L484</accession>
<feature type="chain" id="PRO_0000459824" description="Transcriptional regulator RamA">
    <location>
        <begin position="1"/>
        <end position="113"/>
    </location>
</feature>
<feature type="domain" description="HTH araC/xylS-type" evidence="1">
    <location>
        <begin position="9"/>
        <end position="107"/>
    </location>
</feature>
<feature type="DNA-binding region" description="H-T-H motif" evidence="1">
    <location>
        <begin position="26"/>
        <end position="47"/>
    </location>
</feature>
<feature type="DNA-binding region" description="H-T-H motif" evidence="1">
    <location>
        <begin position="74"/>
        <end position="97"/>
    </location>
</feature>
<feature type="mutagenesis site" description="Abolishes binding to, and transcriptional activation of, the acrAB operon." evidence="2">
    <location>
        <begin position="1"/>
        <end position="23"/>
    </location>
</feature>
<protein>
    <recommendedName>
        <fullName evidence="7">Transcriptional regulator RamA</fullName>
    </recommendedName>
</protein>
<organism evidence="10">
    <name type="scientific">Salmonella typhimurium (strain LT2 / SGSC1412 / ATCC 700720)</name>
    <dbReference type="NCBI Taxonomy" id="99287"/>
    <lineage>
        <taxon>Bacteria</taxon>
        <taxon>Pseudomonadati</taxon>
        <taxon>Pseudomonadota</taxon>
        <taxon>Gammaproteobacteria</taxon>
        <taxon>Enterobacterales</taxon>
        <taxon>Enterobacteriaceae</taxon>
        <taxon>Salmonella</taxon>
    </lineage>
</organism>
<sequence>MTISAQVIDTIVEWIDDNLNQPLRIDDIARHAGYSKWHLQRLFMQYKGESLGRYVRERKLKLAARDLLDTDQKVYDICLKYGFDSQQTFTRIFTRTFNLPPGAYRKEKHGRTH</sequence>
<gene>
    <name evidence="7" type="primary">ramA</name>
    <name evidence="9" type="ordered locus">STM0581</name>
</gene>
<comment type="function">
    <text evidence="2 3 4 5">Transcriptional regulator (PubMed:18577510, PubMed:18694955, PubMed:20081028). Binds to regulatory regions of target genes, including efflux pump operon acrAB and outer membrane protein gene tolC (PubMed:18577510). Represses transcription of genes belonging to the flagellar regulon, including flhD, flhB and fliC; probably thereby leading to repression of motility (PubMed:31501286). Represses expression of the flhDC operon in a post-transcriptional manner (PubMed:31501286). Activates expression of acrAB, perhaps thereby conferring multidrug resistance (PubMed:18577510, PubMed:18694955). Involved in indole- and bile-mediated regulation of acrAB; binding of bile to RamA may contribute to activation of expression of acrAB (PubMed:18577510). Plays a role in regulating virulence in mice (PubMed:20081028).</text>
</comment>
<comment type="induction">
    <text evidence="2 3">Chlorpromazine activates expression (PubMed:18694955). Indole activates expression (PubMed:18577510).</text>
</comment>
<comment type="disruption phenotype">
    <text evidence="2 3 4">Deletion reduces transcription of various genes, including acrB, porins ompC and ompX, and some pathogenicity island genes including invF, sipC, sopB and ssrA, in the SL1344 strain (PubMed:18694955, PubMed:20081028). Reduces growth in the presence of various phenothiazines, including amitriptyline, chlorpromazine, sanguinarine, and thioridazine (PubMed:18694955). Intolerance of hexane (PubMed:18694955). No significant effect on adherence of mutant SL1344 strain to mouse-derived macrophages (PubMed:20081028). However, survival of mutant SL1344 strain bacteria within macrophages is significantly impaired; furthermore, fewer bacteria are recovered from the livers and spleens of BALB/c mice than the parental bacterial strain, following oral inoculation, but not following intravenous inoculation (PubMed:20081028). Deletion eliminates induction of acrAB expression by indole in the 14028S strain (PubMed:18577510).</text>
</comment>
<comment type="miscellaneous">
    <text evidence="3">Overexpression of ramA in the SL1344 strain confers multidrug resistance and also tolerance of both hexane and cyclohexane.</text>
</comment>
<keyword id="KW-0238">DNA-binding</keyword>
<keyword id="KW-1185">Reference proteome</keyword>
<keyword id="KW-0678">Repressor</keyword>
<keyword id="KW-0804">Transcription</keyword>
<keyword id="KW-0805">Transcription regulation</keyword>
<keyword id="KW-0843">Virulence</keyword>
<proteinExistence type="evidence at protein level"/>